<sequence>MADSGDKDVSKSVRFDKESIESKKRSSVDDSASSYSSSSSGQDRSEGKRNNVKFSTEDSDDEDGNLFSRMIKNLKSNGGAGLAPGLSKANSNQEKTDLEDNDNVVTGHSDDIPMEDFTSEAQNILQGHSNLTPAQIEALNGQGLSDIETTASSTDLNFLAPAIDHFDDFDGDGEEENDGFVDTHGYVAPPTQVRGGVLGSLLKLYQEQDNATIETSSMYSQSSYGESTANLMSIDSGETEVPSEHKPKDHKNVFMRSGGKVAGLAMNAPGQIYGHGSKAAGHIYGHGRKGAGHIYNQGKKGAGHIYSQKNKLSSADLSTEGLKKSGHKAKKVAGKMPKLRKRMLAEAKITVHIAELLQRQRFILRMCKALMLYGAPTHRLEEYMIMTSRVLEIDGQYLYLPGCMIVSFGDATTRTSEVQLVRCTQGLNLWKLHQVHGVYKKVIHDQMGADEGNIEIDRILREKNLYPPWVCVFLYGFCSAMVTPYAFGGHWINLAITFFMGSCVGMMQFILSEKSLMYSNVFEITASIVVSFCGRAFGSIPNSNICFGAITQGSLALILPGYIILCGSLELQSRSLVAGSVRMFYAIIYSLFLGFGITLGAALFGWMYKGATNEISCGYPISPWFRFLFVPAFTIGISLINQANWTQLPAMVFISCTGYVVTYWSGKHFQNSTEFTAALASFVIGILGNLYSRIWQGLAVSAMLPAIFVQVPSGIASQNSLLSGLQSANQIVGRNGTNAVQTVDLSNSMSFGITMIEVSIGISVGLFASTLCVYPFGKKKTGLFSL</sequence>
<reference key="1">
    <citation type="journal article" date="2004" name="Nature">
        <title>Genome evolution in yeasts.</title>
        <authorList>
            <person name="Dujon B."/>
            <person name="Sherman D."/>
            <person name="Fischer G."/>
            <person name="Durrens P."/>
            <person name="Casaregola S."/>
            <person name="Lafontaine I."/>
            <person name="de Montigny J."/>
            <person name="Marck C."/>
            <person name="Neuveglise C."/>
            <person name="Talla E."/>
            <person name="Goffard N."/>
            <person name="Frangeul L."/>
            <person name="Aigle M."/>
            <person name="Anthouard V."/>
            <person name="Babour A."/>
            <person name="Barbe V."/>
            <person name="Barnay S."/>
            <person name="Blanchin S."/>
            <person name="Beckerich J.-M."/>
            <person name="Beyne E."/>
            <person name="Bleykasten C."/>
            <person name="Boisrame A."/>
            <person name="Boyer J."/>
            <person name="Cattolico L."/>
            <person name="Confanioleri F."/>
            <person name="de Daruvar A."/>
            <person name="Despons L."/>
            <person name="Fabre E."/>
            <person name="Fairhead C."/>
            <person name="Ferry-Dumazet H."/>
            <person name="Groppi A."/>
            <person name="Hantraye F."/>
            <person name="Hennequin C."/>
            <person name="Jauniaux N."/>
            <person name="Joyet P."/>
            <person name="Kachouri R."/>
            <person name="Kerrest A."/>
            <person name="Koszul R."/>
            <person name="Lemaire M."/>
            <person name="Lesur I."/>
            <person name="Ma L."/>
            <person name="Muller H."/>
            <person name="Nicaud J.-M."/>
            <person name="Nikolski M."/>
            <person name="Oztas S."/>
            <person name="Ozier-Kalogeropoulos O."/>
            <person name="Pellenz S."/>
            <person name="Potier S."/>
            <person name="Richard G.-F."/>
            <person name="Straub M.-L."/>
            <person name="Suleau A."/>
            <person name="Swennen D."/>
            <person name="Tekaia F."/>
            <person name="Wesolowski-Louvel M."/>
            <person name="Westhof E."/>
            <person name="Wirth B."/>
            <person name="Zeniou-Meyer M."/>
            <person name="Zivanovic Y."/>
            <person name="Bolotin-Fukuhara M."/>
            <person name="Thierry A."/>
            <person name="Bouchier C."/>
            <person name="Caudron B."/>
            <person name="Scarpelli C."/>
            <person name="Gaillardin C."/>
            <person name="Weissenbach J."/>
            <person name="Wincker P."/>
            <person name="Souciet J.-L."/>
        </authorList>
    </citation>
    <scope>NUCLEOTIDE SEQUENCE [LARGE SCALE GENOMIC DNA]</scope>
    <source>
        <strain>ATCC 2001 / BCRC 20586 / JCM 3761 / NBRC 0622 / NRRL Y-65 / CBS 138</strain>
    </source>
</reference>
<proteinExistence type="inferred from homology"/>
<gene>
    <name type="ordered locus">CAGL0G04433g</name>
</gene>
<comment type="subcellular location">
    <subcellularLocation>
        <location>Membrane</location>
        <topology>Multi-pass membrane protein</topology>
    </subcellularLocation>
</comment>
<comment type="similarity">
    <text evidence="3">Belongs to the ThrE exporter (TC 2.A.79) family.</text>
</comment>
<feature type="chain" id="PRO_0000409252" description="Pheromone-regulated membrane protein 10">
    <location>
        <begin position="1"/>
        <end position="786"/>
    </location>
</feature>
<feature type="transmembrane region" description="Helical" evidence="1">
    <location>
        <begin position="469"/>
        <end position="489"/>
    </location>
</feature>
<feature type="transmembrane region" description="Helical" evidence="1">
    <location>
        <begin position="491"/>
        <end position="511"/>
    </location>
</feature>
<feature type="transmembrane region" description="Helical" evidence="1">
    <location>
        <begin position="521"/>
        <end position="541"/>
    </location>
</feature>
<feature type="transmembrane region" description="Helical" evidence="1">
    <location>
        <begin position="545"/>
        <end position="565"/>
    </location>
</feature>
<feature type="transmembrane region" description="Helical" evidence="1">
    <location>
        <begin position="584"/>
        <end position="604"/>
    </location>
</feature>
<feature type="transmembrane region" description="Helical" evidence="1">
    <location>
        <begin position="620"/>
        <end position="640"/>
    </location>
</feature>
<feature type="transmembrane region" description="Helical" evidence="1">
    <location>
        <begin position="645"/>
        <end position="665"/>
    </location>
</feature>
<feature type="transmembrane region" description="Helical" evidence="1">
    <location>
        <begin position="675"/>
        <end position="695"/>
    </location>
</feature>
<feature type="transmembrane region" description="Helical" evidence="1">
    <location>
        <begin position="697"/>
        <end position="717"/>
    </location>
</feature>
<feature type="transmembrane region" description="Helical" evidence="1">
    <location>
        <begin position="751"/>
        <end position="771"/>
    </location>
</feature>
<feature type="region of interest" description="Disordered" evidence="2">
    <location>
        <begin position="1"/>
        <end position="65"/>
    </location>
</feature>
<feature type="region of interest" description="Disordered" evidence="2">
    <location>
        <begin position="77"/>
        <end position="103"/>
    </location>
</feature>
<feature type="compositionally biased region" description="Basic and acidic residues" evidence="2">
    <location>
        <begin position="1"/>
        <end position="28"/>
    </location>
</feature>
<feature type="compositionally biased region" description="Low complexity" evidence="2">
    <location>
        <begin position="29"/>
        <end position="42"/>
    </location>
</feature>
<name>PRM10_CANGA</name>
<organism>
    <name type="scientific">Candida glabrata (strain ATCC 2001 / BCRC 20586 / JCM 3761 / NBRC 0622 / NRRL Y-65 / CBS 138)</name>
    <name type="common">Yeast</name>
    <name type="synonym">Nakaseomyces glabratus</name>
    <dbReference type="NCBI Taxonomy" id="284593"/>
    <lineage>
        <taxon>Eukaryota</taxon>
        <taxon>Fungi</taxon>
        <taxon>Dikarya</taxon>
        <taxon>Ascomycota</taxon>
        <taxon>Saccharomycotina</taxon>
        <taxon>Saccharomycetes</taxon>
        <taxon>Saccharomycetales</taxon>
        <taxon>Saccharomycetaceae</taxon>
        <taxon>Nakaseomyces</taxon>
    </lineage>
</organism>
<accession>Q6FT92</accession>
<protein>
    <recommendedName>
        <fullName>Pheromone-regulated membrane protein 10</fullName>
    </recommendedName>
</protein>
<keyword id="KW-0472">Membrane</keyword>
<keyword id="KW-1185">Reference proteome</keyword>
<keyword id="KW-0812">Transmembrane</keyword>
<keyword id="KW-1133">Transmembrane helix</keyword>
<dbReference type="EMBL" id="CR380953">
    <property type="protein sequence ID" value="CAG59479.1"/>
    <property type="molecule type" value="Genomic_DNA"/>
</dbReference>
<dbReference type="RefSeq" id="XP_446552.1">
    <property type="nucleotide sequence ID" value="XM_446552.1"/>
</dbReference>
<dbReference type="EnsemblFungi" id="CAGL0G04433g-T">
    <property type="protein sequence ID" value="CAGL0G04433g-T-p1"/>
    <property type="gene ID" value="CAGL0G04433g"/>
</dbReference>
<dbReference type="KEGG" id="cgr:2888410"/>
<dbReference type="CGD" id="CAL0129301">
    <property type="gene designation" value="CAGL0G04433g"/>
</dbReference>
<dbReference type="VEuPathDB" id="FungiDB:CAGL0G04433g"/>
<dbReference type="eggNOG" id="ENOG502QPMM">
    <property type="taxonomic scope" value="Eukaryota"/>
</dbReference>
<dbReference type="HOGENOM" id="CLU_007078_1_1_1"/>
<dbReference type="InParanoid" id="Q6FT92"/>
<dbReference type="Proteomes" id="UP000002428">
    <property type="component" value="Chromosome G"/>
</dbReference>
<dbReference type="GO" id="GO:0016020">
    <property type="term" value="C:membrane"/>
    <property type="evidence" value="ECO:0007669"/>
    <property type="project" value="UniProtKB-SubCell"/>
</dbReference>
<dbReference type="GO" id="GO:0022857">
    <property type="term" value="F:transmembrane transporter activity"/>
    <property type="evidence" value="ECO:0007669"/>
    <property type="project" value="InterPro"/>
</dbReference>
<dbReference type="InterPro" id="IPR010619">
    <property type="entry name" value="ThrE-like_N"/>
</dbReference>
<dbReference type="InterPro" id="IPR051361">
    <property type="entry name" value="ThrE/Ser_Exporter"/>
</dbReference>
<dbReference type="InterPro" id="IPR024528">
    <property type="entry name" value="ThrE_2"/>
</dbReference>
<dbReference type="PANTHER" id="PTHR31082">
    <property type="entry name" value="PHEROMONE-REGULATED MEMBRANE PROTEIN 10"/>
    <property type="match status" value="1"/>
</dbReference>
<dbReference type="PANTHER" id="PTHR31082:SF4">
    <property type="entry name" value="PHEROMONE-REGULATED MEMBRANE PROTEIN 10"/>
    <property type="match status" value="1"/>
</dbReference>
<dbReference type="Pfam" id="PF06738">
    <property type="entry name" value="ThrE"/>
    <property type="match status" value="1"/>
</dbReference>
<dbReference type="Pfam" id="PF12821">
    <property type="entry name" value="ThrE_2"/>
    <property type="match status" value="1"/>
</dbReference>
<evidence type="ECO:0000255" key="1"/>
<evidence type="ECO:0000256" key="2">
    <source>
        <dbReference type="SAM" id="MobiDB-lite"/>
    </source>
</evidence>
<evidence type="ECO:0000305" key="3"/>